<keyword id="KW-0028">Amino-acid biosynthesis</keyword>
<keyword id="KW-0055">Arginine biosynthesis</keyword>
<keyword id="KW-0963">Cytoplasm</keyword>
<keyword id="KW-0808">Transferase</keyword>
<reference key="1">
    <citation type="journal article" date="2006" name="J. Bacteriol.">
        <title>Complete genome sequence of Yersinia pestis strains Antiqua and Nepal516: evidence of gene reduction in an emerging pathogen.</title>
        <authorList>
            <person name="Chain P.S.G."/>
            <person name="Hu P."/>
            <person name="Malfatti S.A."/>
            <person name="Radnedge L."/>
            <person name="Larimer F."/>
            <person name="Vergez L.M."/>
            <person name="Worsham P."/>
            <person name="Chu M.C."/>
            <person name="Andersen G.L."/>
        </authorList>
    </citation>
    <scope>NUCLEOTIDE SEQUENCE [LARGE SCALE GENOMIC DNA]</scope>
    <source>
        <strain>Nepal516</strain>
    </source>
</reference>
<reference key="2">
    <citation type="submission" date="2009-04" db="EMBL/GenBank/DDBJ databases">
        <title>Yersinia pestis Nepal516A whole genome shotgun sequencing project.</title>
        <authorList>
            <person name="Plunkett G. III"/>
            <person name="Anderson B.D."/>
            <person name="Baumler D.J."/>
            <person name="Burland V."/>
            <person name="Cabot E.L."/>
            <person name="Glasner J.D."/>
            <person name="Mau B."/>
            <person name="Neeno-Eckwall E."/>
            <person name="Perna N.T."/>
            <person name="Munk A.C."/>
            <person name="Tapia R."/>
            <person name="Green L.D."/>
            <person name="Rogers Y.C."/>
            <person name="Detter J.C."/>
            <person name="Bruce D.C."/>
            <person name="Brettin T.S."/>
        </authorList>
    </citation>
    <scope>NUCLEOTIDE SEQUENCE [LARGE SCALE GENOMIC DNA]</scope>
    <source>
        <strain>Nepal516</strain>
    </source>
</reference>
<organism>
    <name type="scientific">Yersinia pestis bv. Antiqua (strain Nepal516)</name>
    <dbReference type="NCBI Taxonomy" id="377628"/>
    <lineage>
        <taxon>Bacteria</taxon>
        <taxon>Pseudomonadati</taxon>
        <taxon>Pseudomonadota</taxon>
        <taxon>Gammaproteobacteria</taxon>
        <taxon>Enterobacterales</taxon>
        <taxon>Yersiniaceae</taxon>
        <taxon>Yersinia</taxon>
    </lineage>
</organism>
<feature type="chain" id="PRO_1000065135" description="Ornithine carbamoyltransferase">
    <location>
        <begin position="1"/>
        <end position="335"/>
    </location>
</feature>
<feature type="binding site" evidence="2">
    <location>
        <begin position="56"/>
        <end position="59"/>
    </location>
    <ligand>
        <name>carbamoyl phosphate</name>
        <dbReference type="ChEBI" id="CHEBI:58228"/>
    </ligand>
</feature>
<feature type="binding site" evidence="2">
    <location>
        <position position="83"/>
    </location>
    <ligand>
        <name>carbamoyl phosphate</name>
        <dbReference type="ChEBI" id="CHEBI:58228"/>
    </ligand>
</feature>
<feature type="binding site" evidence="2">
    <location>
        <position position="107"/>
    </location>
    <ligand>
        <name>carbamoyl phosphate</name>
        <dbReference type="ChEBI" id="CHEBI:58228"/>
    </ligand>
</feature>
<feature type="binding site" evidence="2">
    <location>
        <begin position="134"/>
        <end position="137"/>
    </location>
    <ligand>
        <name>carbamoyl phosphate</name>
        <dbReference type="ChEBI" id="CHEBI:58228"/>
    </ligand>
</feature>
<feature type="binding site" evidence="2">
    <location>
        <position position="168"/>
    </location>
    <ligand>
        <name>L-ornithine</name>
        <dbReference type="ChEBI" id="CHEBI:46911"/>
    </ligand>
</feature>
<feature type="binding site" evidence="2">
    <location>
        <position position="232"/>
    </location>
    <ligand>
        <name>L-ornithine</name>
        <dbReference type="ChEBI" id="CHEBI:46911"/>
    </ligand>
</feature>
<feature type="binding site" evidence="2">
    <location>
        <begin position="236"/>
        <end position="237"/>
    </location>
    <ligand>
        <name>L-ornithine</name>
        <dbReference type="ChEBI" id="CHEBI:46911"/>
    </ligand>
</feature>
<feature type="binding site" evidence="2">
    <location>
        <begin position="274"/>
        <end position="275"/>
    </location>
    <ligand>
        <name>carbamoyl phosphate</name>
        <dbReference type="ChEBI" id="CHEBI:58228"/>
    </ligand>
</feature>
<feature type="binding site" evidence="2">
    <location>
        <position position="320"/>
    </location>
    <ligand>
        <name>carbamoyl phosphate</name>
        <dbReference type="ChEBI" id="CHEBI:58228"/>
    </ligand>
</feature>
<evidence type="ECO:0000250" key="1"/>
<evidence type="ECO:0000255" key="2">
    <source>
        <dbReference type="HAMAP-Rule" id="MF_01109"/>
    </source>
</evidence>
<protein>
    <recommendedName>
        <fullName evidence="2">Ornithine carbamoyltransferase</fullName>
        <shortName evidence="2">OTCase</shortName>
        <ecNumber evidence="2">2.1.3.3</ecNumber>
    </recommendedName>
</protein>
<sequence>MNQFYKRHFLRLLDFTPAEIIALLDLATELKKDKKSGCEQQKLVGKNIALIFEKDSTRTRCSFEVAAYDQGARVTYLGPGGSQIGHKESIKDTARVLGRMYDGIQYRGYGQRVVETLAEFAGVPVWNGLTDEFHPTQLLADLLTMREHLPNKSLNKMTLAYLGDTRNNMGNSLLEAAALVGMDLRLVAPKACWPEEAFVISCQALAQKTGGKITLTEDIAEGVNGADFLYTDVWVSMGEPKEVWQERINLLKPYQVNMRVLTLTGNPQVKFLHCLPAFHDDQTTIGKQMAEQYDLPGGMEVTEEVFESAHSIVFDQAENRLHTIKAVMVATMSKI</sequence>
<comment type="function">
    <text evidence="1">Reversibly catalyzes the transfer of the carbamoyl group from carbamoyl phosphate (CP) to the N(epsilon) atom of ornithine (ORN) to produce L-citrulline.</text>
</comment>
<comment type="catalytic activity">
    <reaction evidence="2">
        <text>carbamoyl phosphate + L-ornithine = L-citrulline + phosphate + H(+)</text>
        <dbReference type="Rhea" id="RHEA:19513"/>
        <dbReference type="ChEBI" id="CHEBI:15378"/>
        <dbReference type="ChEBI" id="CHEBI:43474"/>
        <dbReference type="ChEBI" id="CHEBI:46911"/>
        <dbReference type="ChEBI" id="CHEBI:57743"/>
        <dbReference type="ChEBI" id="CHEBI:58228"/>
        <dbReference type="EC" id="2.1.3.3"/>
    </reaction>
</comment>
<comment type="pathway">
    <text evidence="2">Amino-acid biosynthesis; L-arginine biosynthesis; L-arginine from L-ornithine and carbamoyl phosphate: step 1/3.</text>
</comment>
<comment type="subcellular location">
    <subcellularLocation>
        <location evidence="2">Cytoplasm</location>
    </subcellularLocation>
</comment>
<comment type="similarity">
    <text evidence="2">Belongs to the aspartate/ornithine carbamoyltransferase superfamily. OTCase family.</text>
</comment>
<dbReference type="EC" id="2.1.3.3" evidence="2"/>
<dbReference type="EMBL" id="CP000305">
    <property type="protein sequence ID" value="ABG16974.1"/>
    <property type="molecule type" value="Genomic_DNA"/>
</dbReference>
<dbReference type="EMBL" id="ACNQ01000006">
    <property type="protein sequence ID" value="EEO78441.1"/>
    <property type="molecule type" value="Genomic_DNA"/>
</dbReference>
<dbReference type="SMR" id="Q1CM06"/>
<dbReference type="KEGG" id="ypn:YPN_0642"/>
<dbReference type="HOGENOM" id="CLU_043846_3_1_6"/>
<dbReference type="UniPathway" id="UPA00068">
    <property type="reaction ID" value="UER00112"/>
</dbReference>
<dbReference type="Proteomes" id="UP000008936">
    <property type="component" value="Chromosome"/>
</dbReference>
<dbReference type="GO" id="GO:0005737">
    <property type="term" value="C:cytoplasm"/>
    <property type="evidence" value="ECO:0007669"/>
    <property type="project" value="UniProtKB-SubCell"/>
</dbReference>
<dbReference type="GO" id="GO:0016597">
    <property type="term" value="F:amino acid binding"/>
    <property type="evidence" value="ECO:0007669"/>
    <property type="project" value="InterPro"/>
</dbReference>
<dbReference type="GO" id="GO:0004585">
    <property type="term" value="F:ornithine carbamoyltransferase activity"/>
    <property type="evidence" value="ECO:0007669"/>
    <property type="project" value="UniProtKB-UniRule"/>
</dbReference>
<dbReference type="GO" id="GO:0042450">
    <property type="term" value="P:arginine biosynthetic process via ornithine"/>
    <property type="evidence" value="ECO:0007669"/>
    <property type="project" value="TreeGrafter"/>
</dbReference>
<dbReference type="GO" id="GO:0019240">
    <property type="term" value="P:citrulline biosynthetic process"/>
    <property type="evidence" value="ECO:0007669"/>
    <property type="project" value="TreeGrafter"/>
</dbReference>
<dbReference type="GO" id="GO:0006526">
    <property type="term" value="P:L-arginine biosynthetic process"/>
    <property type="evidence" value="ECO:0007669"/>
    <property type="project" value="UniProtKB-UniRule"/>
</dbReference>
<dbReference type="FunFam" id="3.40.50.1370:FF:000004">
    <property type="entry name" value="Ornithine carbamoyltransferase"/>
    <property type="match status" value="1"/>
</dbReference>
<dbReference type="Gene3D" id="3.40.50.1370">
    <property type="entry name" value="Aspartate/ornithine carbamoyltransferase"/>
    <property type="match status" value="2"/>
</dbReference>
<dbReference type="HAMAP" id="MF_01109">
    <property type="entry name" value="OTCase"/>
    <property type="match status" value="1"/>
</dbReference>
<dbReference type="InterPro" id="IPR006132">
    <property type="entry name" value="Asp/Orn_carbamoyltranf_P-bd"/>
</dbReference>
<dbReference type="InterPro" id="IPR006130">
    <property type="entry name" value="Asp/Orn_carbamoylTrfase"/>
</dbReference>
<dbReference type="InterPro" id="IPR036901">
    <property type="entry name" value="Asp/Orn_carbamoylTrfase_sf"/>
</dbReference>
<dbReference type="InterPro" id="IPR006131">
    <property type="entry name" value="Asp_carbamoyltransf_Asp/Orn-bd"/>
</dbReference>
<dbReference type="InterPro" id="IPR002292">
    <property type="entry name" value="Orn/put_carbamltrans"/>
</dbReference>
<dbReference type="InterPro" id="IPR024904">
    <property type="entry name" value="OTCase_ArgI"/>
</dbReference>
<dbReference type="NCBIfam" id="TIGR00658">
    <property type="entry name" value="orni_carb_tr"/>
    <property type="match status" value="1"/>
</dbReference>
<dbReference type="NCBIfam" id="NF001986">
    <property type="entry name" value="PRK00779.1"/>
    <property type="match status" value="1"/>
</dbReference>
<dbReference type="NCBIfam" id="NF003286">
    <property type="entry name" value="PRK04284.1"/>
    <property type="match status" value="1"/>
</dbReference>
<dbReference type="NCBIfam" id="NF009213">
    <property type="entry name" value="PRK12562.1"/>
    <property type="match status" value="1"/>
</dbReference>
<dbReference type="PANTHER" id="PTHR45753:SF4">
    <property type="entry name" value="ORNITHINE CARBAMOYLTRANSFERASE SUBUNIT F-RELATED"/>
    <property type="match status" value="1"/>
</dbReference>
<dbReference type="PANTHER" id="PTHR45753">
    <property type="entry name" value="ORNITHINE CARBAMOYLTRANSFERASE, MITOCHONDRIAL"/>
    <property type="match status" value="1"/>
</dbReference>
<dbReference type="Pfam" id="PF00185">
    <property type="entry name" value="OTCace"/>
    <property type="match status" value="1"/>
</dbReference>
<dbReference type="Pfam" id="PF02729">
    <property type="entry name" value="OTCace_N"/>
    <property type="match status" value="1"/>
</dbReference>
<dbReference type="PRINTS" id="PR00100">
    <property type="entry name" value="AOTCASE"/>
</dbReference>
<dbReference type="PRINTS" id="PR00102">
    <property type="entry name" value="OTCASE"/>
</dbReference>
<dbReference type="SUPFAM" id="SSF53671">
    <property type="entry name" value="Aspartate/ornithine carbamoyltransferase"/>
    <property type="match status" value="1"/>
</dbReference>
<dbReference type="PROSITE" id="PS00097">
    <property type="entry name" value="CARBAMOYLTRANSFERASE"/>
    <property type="match status" value="1"/>
</dbReference>
<accession>Q1CM06</accession>
<accession>C4GPK9</accession>
<name>OTC_YERPN</name>
<proteinExistence type="inferred from homology"/>
<gene>
    <name evidence="2" type="primary">argI</name>
    <name type="ordered locus">YPN_0642</name>
    <name type="ORF">YP516_0678</name>
</gene>